<comment type="function">
    <text evidence="1 7">TonB-dependent receptor probably involved in ulvan degradation (Probable). Ulvan is the main polysaccharide component of the Ulvales (green seaweed) cell wall. It is composed of disaccharide building blocks comprising 3-sulfated rhamnose (Rha3S) linked to D-glucuronic acid (GlcA), L-iduronic acid (IduA), or D-xylose (Xyl) (Probable). The TonB-dependent receptor may mediate transport of ulvan oligosaccharides from the surface of the outer membrane to the periplasm for subsequent degradation (By similarity).</text>
</comment>
<comment type="subcellular location">
    <subcellularLocation>
        <location evidence="3 4">Cell outer membrane</location>
        <topology evidence="1 3">Multi-pass membrane protein</topology>
    </subcellularLocation>
</comment>
<comment type="induction">
    <text evidence="4">By ulvan and rhamnose.</text>
</comment>
<comment type="similarity">
    <text evidence="6">Belongs to the TonB-dependent receptor family.</text>
</comment>
<dbReference type="EMBL" id="HG315671">
    <property type="protein sequence ID" value="CDF79940.1"/>
    <property type="molecule type" value="Genomic_DNA"/>
</dbReference>
<dbReference type="SMR" id="T2KMI3"/>
<dbReference type="STRING" id="1347342.BN863_22280"/>
<dbReference type="PATRIC" id="fig|1347342.6.peg.2235"/>
<dbReference type="eggNOG" id="COG4771">
    <property type="taxonomic scope" value="Bacteria"/>
</dbReference>
<dbReference type="HOGENOM" id="CLU_004317_1_1_10"/>
<dbReference type="Proteomes" id="UP000016160">
    <property type="component" value="Chromosome"/>
</dbReference>
<dbReference type="GO" id="GO:0009279">
    <property type="term" value="C:cell outer membrane"/>
    <property type="evidence" value="ECO:0007669"/>
    <property type="project" value="UniProtKB-SubCell"/>
</dbReference>
<dbReference type="Gene3D" id="2.60.40.1120">
    <property type="entry name" value="Carboxypeptidase-like, regulatory domain"/>
    <property type="match status" value="1"/>
</dbReference>
<dbReference type="Gene3D" id="2.40.170.20">
    <property type="entry name" value="TonB-dependent receptor, beta-barrel domain"/>
    <property type="match status" value="1"/>
</dbReference>
<dbReference type="Gene3D" id="2.170.130.10">
    <property type="entry name" value="TonB-dependent receptor, plug domain"/>
    <property type="match status" value="1"/>
</dbReference>
<dbReference type="InterPro" id="IPR008969">
    <property type="entry name" value="CarboxyPept-like_regulatory"/>
</dbReference>
<dbReference type="InterPro" id="IPR012910">
    <property type="entry name" value="Plug_dom"/>
</dbReference>
<dbReference type="InterPro" id="IPR037066">
    <property type="entry name" value="Plug_dom_sf"/>
</dbReference>
<dbReference type="InterPro" id="IPR023996">
    <property type="entry name" value="TonB-dep_OMP_SusC/RagA"/>
</dbReference>
<dbReference type="InterPro" id="IPR023997">
    <property type="entry name" value="TonB-dep_OMP_SusC/RagA_CS"/>
</dbReference>
<dbReference type="InterPro" id="IPR039426">
    <property type="entry name" value="TonB-dep_rcpt-like"/>
</dbReference>
<dbReference type="InterPro" id="IPR000531">
    <property type="entry name" value="TonB-dep_rcpt_b-brl"/>
</dbReference>
<dbReference type="InterPro" id="IPR036942">
    <property type="entry name" value="TonB_rcpt_b-brl_sf"/>
</dbReference>
<dbReference type="NCBIfam" id="TIGR04056">
    <property type="entry name" value="OMP_RagA_SusC"/>
    <property type="match status" value="1"/>
</dbReference>
<dbReference type="NCBIfam" id="TIGR04057">
    <property type="entry name" value="SusC_RagA_signa"/>
    <property type="match status" value="1"/>
</dbReference>
<dbReference type="Pfam" id="PF13715">
    <property type="entry name" value="CarbopepD_reg_2"/>
    <property type="match status" value="1"/>
</dbReference>
<dbReference type="Pfam" id="PF07715">
    <property type="entry name" value="Plug"/>
    <property type="match status" value="1"/>
</dbReference>
<dbReference type="Pfam" id="PF00593">
    <property type="entry name" value="TonB_dep_Rec_b-barrel"/>
    <property type="match status" value="1"/>
</dbReference>
<dbReference type="SUPFAM" id="SSF49464">
    <property type="entry name" value="Carboxypeptidase regulatory domain-like"/>
    <property type="match status" value="1"/>
</dbReference>
<dbReference type="SUPFAM" id="SSF56935">
    <property type="entry name" value="Porins"/>
    <property type="match status" value="1"/>
</dbReference>
<dbReference type="PROSITE" id="PS52016">
    <property type="entry name" value="TONB_DEPENDENT_REC_3"/>
    <property type="match status" value="1"/>
</dbReference>
<name>PLH39_FORAG</name>
<sequence>MFKQKLKMKPKIKRNCTFSGLAFILMLLFSSFTVNNLNAQSEVTGTIMGEDGIPIPGVNVIQKGTKNGTVTDFDGRYSVTLVPGQLVLVYSYIGYETQEVPIKSRKVIDLTLKAELQSLDEVVVIGYGEQKRADVIGAVGSVDSEELSSVSPVDALQGIQGRVAGVQVTTNGGPGGDSEIIIRGISTFGAGSSPLYVVDGQQVNDITNINPADIESMDILKDGASAAIYGSKSANGVVLITTKQGKPGFPKMTVDYISSVSFLNNLVPVSNTRQWNKFESLRTGSTDASGQVEDSLGIRSQLVVDVQDAIKQLGVKNQVNLAFSGGGEKSKFYWNTGYLDETGIVKGSGYNRITSNLKIDFDLNKFITAGTRMTGTYQMQDGINEGSVFRNLSYRQPNVLLVDFDGSYIRERYARNNPLARAELQVNDNRQFSSTIFNYISVKLAPGLTFKTTLGFNYRNQKLNQFNPQETVNIDNGKINGRERVNTFYDFQNENFFNYNKTFNDKHTVTGLAGFSIQRWWYEYSDLNAIEFNNDYIQTFNNVKEYNLNTTGTDATTHALSSLYARIGYDYKSKYLITASIRRDGSSRFGENRIWGNFPAIQLGWKISEENFMKSLGFINLLKLRASYAITGNERIGDFESIALYNPGFFYNSVNGFAPVQLGNGDLGWEETAQQNYGIDLSLFKRRLNVSVDRYVKTTDDLLYNVPIPQETGFSNIRANIGSVENRGWEVSIAAKPIRNERFTWTTSFNFSYNENEVLELADEDGFETGGYLIEEGESLGNMYGYKNLGVFQYDESNAFTPDGIRLTPNFDANQNFVNYTLNGQAYNGDIERLKFANKVLRGGDIIFQDQNGDFNIDAANDRTIIGNGLSDFAGGFSNRFDYNGFFFSFLFNYNFGNDIYRDYDHIRDKASNAVYAPSPDRIDGAWVNPGDITKYPSLEVSRANNRSGYESNYVSSADFISLRNIQLGYSFNPDTLNKLGFINRLSLNASINNVFMFTNYEGYNPELGNRGNALEPGWDSLRYPNQTEIVIGLNVEF</sequence>
<reference key="1">
    <citation type="journal article" date="2013" name="Appl. Environ. Microbiol.">
        <title>The genome of the alga-associated marine flavobacterium Formosa agariphila KMM 3901T reveals a broad potential for degradation of algal polysaccharides.</title>
        <authorList>
            <person name="Mann A.J."/>
            <person name="Hahnke R.L."/>
            <person name="Huang S."/>
            <person name="Werner J."/>
            <person name="Xing P."/>
            <person name="Barbeyron T."/>
            <person name="Huettel B."/>
            <person name="Stueber K."/>
            <person name="Reinhardt R."/>
            <person name="Harder J."/>
            <person name="Gloeckner F.O."/>
            <person name="Amann R.I."/>
            <person name="Teeling H."/>
        </authorList>
    </citation>
    <scope>NUCLEOTIDE SEQUENCE [LARGE SCALE GENOMIC DNA]</scope>
    <source>
        <strain>DSM 15362 / KCTC 12365 / LMG 23005 / KMM 3901 / M-2Alg 35-1</strain>
    </source>
</reference>
<reference key="2">
    <citation type="journal article" date="2019" name="Nat. Chem. Biol.">
        <title>A marine bacterial enzymatic cascade degrades the algal polysaccharide ulvan.</title>
        <authorList>
            <person name="Reisky L."/>
            <person name="Prechoux A."/>
            <person name="Zuehlke M.K."/>
            <person name="Baeumgen M."/>
            <person name="Robb C.S."/>
            <person name="Gerlach N."/>
            <person name="Roret T."/>
            <person name="Stanetty C."/>
            <person name="Larocque R."/>
            <person name="Michel G."/>
            <person name="Song T."/>
            <person name="Markert S."/>
            <person name="Unfried F."/>
            <person name="Mihovilovic M.D."/>
            <person name="Trautwein-Schult A."/>
            <person name="Becher D."/>
            <person name="Schweder T."/>
            <person name="Bornscheuer U.T."/>
            <person name="Hehemann J.H."/>
        </authorList>
    </citation>
    <scope>FUNCTION</scope>
    <scope>SUBCELLULAR LOCATION</scope>
    <scope>INDUCTION</scope>
</reference>
<keyword id="KW-0998">Cell outer membrane</keyword>
<keyword id="KW-0472">Membrane</keyword>
<keyword id="KW-0675">Receptor</keyword>
<keyword id="KW-1185">Reference proteome</keyword>
<keyword id="KW-0732">Signal</keyword>
<keyword id="KW-0798">TonB box</keyword>
<keyword id="KW-0812">Transmembrane</keyword>
<keyword id="KW-1134">Transmembrane beta strand</keyword>
<keyword id="KW-0813">Transport</keyword>
<feature type="signal peptide" evidence="2">
    <location>
        <begin position="1"/>
        <end position="39"/>
    </location>
</feature>
<feature type="chain" id="PRO_5004591063" description="TonB-dependent receptor P39">
    <location>
        <begin position="40"/>
        <end position="1038"/>
    </location>
</feature>
<feature type="domain" description="TBDR plug" evidence="3">
    <location>
        <begin position="131"/>
        <end position="243"/>
    </location>
</feature>
<feature type="domain" description="TBDR beta-barrel" evidence="3">
    <location>
        <begin position="249"/>
        <end position="1038"/>
    </location>
</feature>
<feature type="short sequence motif" description="TonB box" evidence="2">
    <location>
        <begin position="120"/>
        <end position="127"/>
    </location>
</feature>
<feature type="short sequence motif" description="TonB C-terminal box" evidence="2">
    <location>
        <begin position="1021"/>
        <end position="1038"/>
    </location>
</feature>
<protein>
    <recommendedName>
        <fullName evidence="5">TonB-dependent receptor P39</fullName>
        <shortName evidence="5">P39_TBDR</shortName>
    </recommendedName>
    <alternativeName>
        <fullName evidence="5">Polysaccharide utilization locus H protein P39</fullName>
        <shortName>PUL H protein P39</shortName>
    </alternativeName>
</protein>
<accession>T2KMI3</accession>
<proteinExistence type="evidence at transcript level"/>
<evidence type="ECO:0000250" key="1">
    <source>
        <dbReference type="UniProtKB" id="Q8A1G2"/>
    </source>
</evidence>
<evidence type="ECO:0000255" key="2"/>
<evidence type="ECO:0000255" key="3">
    <source>
        <dbReference type="PROSITE-ProRule" id="PRU01360"/>
    </source>
</evidence>
<evidence type="ECO:0000269" key="4">
    <source>
    </source>
</evidence>
<evidence type="ECO:0000303" key="5">
    <source>
    </source>
</evidence>
<evidence type="ECO:0000305" key="6"/>
<evidence type="ECO:0000305" key="7">
    <source>
    </source>
</evidence>
<gene>
    <name type="ORF">BN863_22280</name>
</gene>
<organism>
    <name type="scientific">Formosa agariphila (strain DSM 15362 / KCTC 12365 / LMG 23005 / KMM 3901 / M-2Alg 35-1)</name>
    <dbReference type="NCBI Taxonomy" id="1347342"/>
    <lineage>
        <taxon>Bacteria</taxon>
        <taxon>Pseudomonadati</taxon>
        <taxon>Bacteroidota</taxon>
        <taxon>Flavobacteriia</taxon>
        <taxon>Flavobacteriales</taxon>
        <taxon>Flavobacteriaceae</taxon>
        <taxon>Formosa</taxon>
    </lineage>
</organism>